<evidence type="ECO:0000250" key="1"/>
<evidence type="ECO:0000255" key="2">
    <source>
        <dbReference type="PROSITE-ProRule" id="PRU00541"/>
    </source>
</evidence>
<evidence type="ECO:0000255" key="3">
    <source>
        <dbReference type="PROSITE-ProRule" id="PRU00542"/>
    </source>
</evidence>
<evidence type="ECO:0000305" key="4"/>
<protein>
    <recommendedName>
        <fullName>ATP-dependent RNA helicase eIF4A</fullName>
        <ecNumber>3.6.4.13</ecNumber>
    </recommendedName>
    <alternativeName>
        <fullName>Eukaryotic initiation factor 4A</fullName>
        <shortName>eIF-4A</shortName>
    </alternativeName>
    <alternativeName>
        <fullName>Translation initiation factor 1</fullName>
    </alternativeName>
</protein>
<feature type="chain" id="PRO_0000232137" description="ATP-dependent RNA helicase eIF4A">
    <location>
        <begin position="1"/>
        <end position="396"/>
    </location>
</feature>
<feature type="domain" description="Helicase ATP-binding" evidence="2">
    <location>
        <begin position="53"/>
        <end position="223"/>
    </location>
</feature>
<feature type="domain" description="Helicase C-terminal" evidence="3">
    <location>
        <begin position="234"/>
        <end position="395"/>
    </location>
</feature>
<feature type="short sequence motif" description="Q motif">
    <location>
        <begin position="22"/>
        <end position="50"/>
    </location>
</feature>
<feature type="short sequence motif" description="DEAD box">
    <location>
        <begin position="171"/>
        <end position="174"/>
    </location>
</feature>
<feature type="binding site" evidence="2">
    <location>
        <begin position="66"/>
        <end position="73"/>
    </location>
    <ligand>
        <name>ATP</name>
        <dbReference type="ChEBI" id="CHEBI:30616"/>
    </ligand>
</feature>
<name>IF4A_KLULA</name>
<proteinExistence type="inferred from homology"/>
<accession>Q6CXT4</accession>
<comment type="function">
    <text evidence="1">ATP-dependent RNA helicase which is a subunit of the eIF4F complex involved in cap recognition and is required for mRNA binding to ribosome. In the current model of translation initiation, eIF4A unwinds RNA secondary structures in the 5'-UTR of mRNAs which is necessary to allow efficient binding of the small ribosomal subunit, and subsequent scanning for the initiator codon (By similarity).</text>
</comment>
<comment type="catalytic activity">
    <reaction>
        <text>ATP + H2O = ADP + phosphate + H(+)</text>
        <dbReference type="Rhea" id="RHEA:13065"/>
        <dbReference type="ChEBI" id="CHEBI:15377"/>
        <dbReference type="ChEBI" id="CHEBI:15378"/>
        <dbReference type="ChEBI" id="CHEBI:30616"/>
        <dbReference type="ChEBI" id="CHEBI:43474"/>
        <dbReference type="ChEBI" id="CHEBI:456216"/>
        <dbReference type="EC" id="3.6.4.13"/>
    </reaction>
</comment>
<comment type="subunit">
    <text evidence="1">Component of the eIF4F complex, which composition varies with external and internal environmental conditions. It is composed of at least eIF4A, eIF4E and eIF4G (By similarity).</text>
</comment>
<comment type="subcellular location">
    <subcellularLocation>
        <location evidence="1">Cytoplasm</location>
    </subcellularLocation>
</comment>
<comment type="domain">
    <text>The Q motif is unique to and characteristic of the DEAD box family of RNA helicases and controls ATP binding and hydrolysis.</text>
</comment>
<comment type="similarity">
    <text evidence="4">Belongs to the DEAD box helicase family. eIF4A subfamily.</text>
</comment>
<gene>
    <name type="primary">TIF1</name>
    <name type="synonym">TIF41</name>
    <name type="ordered locus">KLLA0A05731g</name>
</gene>
<keyword id="KW-0067">ATP-binding</keyword>
<keyword id="KW-0963">Cytoplasm</keyword>
<keyword id="KW-0347">Helicase</keyword>
<keyword id="KW-0378">Hydrolase</keyword>
<keyword id="KW-0396">Initiation factor</keyword>
<keyword id="KW-0547">Nucleotide-binding</keyword>
<keyword id="KW-0648">Protein biosynthesis</keyword>
<keyword id="KW-1185">Reference proteome</keyword>
<keyword id="KW-0694">RNA-binding</keyword>
<sequence length="396" mass="44557">MSDGITDIDENQIQSTYDKVVYSFDDLKLKEELLRGIFGYGFVEPSAIQQRAILPIIEGKDVLAQAQSGTGKTGTFSIAALQNIDEKIKAPQGLILAPTRELALQIQKVVMALAIHMDVKVHACIGGTSLQEDSEALRGGAQIIVGTPGRVFDMIDRRIFKTDNIKMFILDEADEMLSTGFKEQIYNIFTMLPPTSQVVLLSATMPGDVLEVTSKFMKDPVRILVKKDELTLEGIGQYYVNVEEEQYKYDCLTDLYDSISVTQAVIFCNTRRKVEELTERLRENNFTVSAIYSDLQQQERDTIMKEFRSGSSRILISTDLLARGIDVQQVSLVINYDLPSNKENYIHRIGRGGRFGRKGIAINFVTNKDIGAMRELERFYSTQIEELPSSISELFD</sequence>
<dbReference type="EC" id="3.6.4.13"/>
<dbReference type="EMBL" id="CR382121">
    <property type="protein sequence ID" value="CAH02843.1"/>
    <property type="molecule type" value="Genomic_DNA"/>
</dbReference>
<dbReference type="RefSeq" id="XP_451255.1">
    <property type="nucleotide sequence ID" value="XM_451255.1"/>
</dbReference>
<dbReference type="SMR" id="Q6CXT4"/>
<dbReference type="FunCoup" id="Q6CXT4">
    <property type="interactions" value="1406"/>
</dbReference>
<dbReference type="STRING" id="284590.Q6CXT4"/>
<dbReference type="PaxDb" id="284590-Q6CXT4"/>
<dbReference type="KEGG" id="kla:KLLA0_A05731g"/>
<dbReference type="eggNOG" id="KOG0327">
    <property type="taxonomic scope" value="Eukaryota"/>
</dbReference>
<dbReference type="HOGENOM" id="CLU_003041_1_0_1"/>
<dbReference type="InParanoid" id="Q6CXT4"/>
<dbReference type="OMA" id="FGCQALV"/>
<dbReference type="Proteomes" id="UP000000598">
    <property type="component" value="Chromosome A"/>
</dbReference>
<dbReference type="GO" id="GO:0005737">
    <property type="term" value="C:cytoplasm"/>
    <property type="evidence" value="ECO:0007669"/>
    <property type="project" value="UniProtKB-SubCell"/>
</dbReference>
<dbReference type="GO" id="GO:0005524">
    <property type="term" value="F:ATP binding"/>
    <property type="evidence" value="ECO:0007669"/>
    <property type="project" value="UniProtKB-KW"/>
</dbReference>
<dbReference type="GO" id="GO:0016887">
    <property type="term" value="F:ATP hydrolysis activity"/>
    <property type="evidence" value="ECO:0007669"/>
    <property type="project" value="RHEA"/>
</dbReference>
<dbReference type="GO" id="GO:0003723">
    <property type="term" value="F:RNA binding"/>
    <property type="evidence" value="ECO:0007669"/>
    <property type="project" value="UniProtKB-KW"/>
</dbReference>
<dbReference type="GO" id="GO:0003724">
    <property type="term" value="F:RNA helicase activity"/>
    <property type="evidence" value="ECO:0007669"/>
    <property type="project" value="UniProtKB-EC"/>
</dbReference>
<dbReference type="GO" id="GO:0003743">
    <property type="term" value="F:translation initiation factor activity"/>
    <property type="evidence" value="ECO:0007669"/>
    <property type="project" value="UniProtKB-KW"/>
</dbReference>
<dbReference type="CDD" id="cd18046">
    <property type="entry name" value="DEADc_EIF4AII_EIF4AI_DDX2"/>
    <property type="match status" value="1"/>
</dbReference>
<dbReference type="CDD" id="cd18787">
    <property type="entry name" value="SF2_C_DEAD"/>
    <property type="match status" value="1"/>
</dbReference>
<dbReference type="FunFam" id="3.40.50.300:FF:000089">
    <property type="entry name" value="Eukaryotic initiation factor 4A-II"/>
    <property type="match status" value="1"/>
</dbReference>
<dbReference type="FunFam" id="3.40.50.300:FF:000031">
    <property type="entry name" value="Eukaryotic initiation factor 4A-III"/>
    <property type="match status" value="1"/>
</dbReference>
<dbReference type="Gene3D" id="3.40.50.300">
    <property type="entry name" value="P-loop containing nucleotide triphosphate hydrolases"/>
    <property type="match status" value="2"/>
</dbReference>
<dbReference type="InterPro" id="IPR011545">
    <property type="entry name" value="DEAD/DEAH_box_helicase_dom"/>
</dbReference>
<dbReference type="InterPro" id="IPR044728">
    <property type="entry name" value="EIF4A_DEADc"/>
</dbReference>
<dbReference type="InterPro" id="IPR014001">
    <property type="entry name" value="Helicase_ATP-bd"/>
</dbReference>
<dbReference type="InterPro" id="IPR001650">
    <property type="entry name" value="Helicase_C-like"/>
</dbReference>
<dbReference type="InterPro" id="IPR027417">
    <property type="entry name" value="P-loop_NTPase"/>
</dbReference>
<dbReference type="InterPro" id="IPR000629">
    <property type="entry name" value="RNA-helicase_DEAD-box_CS"/>
</dbReference>
<dbReference type="InterPro" id="IPR014014">
    <property type="entry name" value="RNA_helicase_DEAD_Q_motif"/>
</dbReference>
<dbReference type="PANTHER" id="PTHR47958">
    <property type="entry name" value="ATP-DEPENDENT RNA HELICASE DBP3"/>
    <property type="match status" value="1"/>
</dbReference>
<dbReference type="Pfam" id="PF00270">
    <property type="entry name" value="DEAD"/>
    <property type="match status" value="1"/>
</dbReference>
<dbReference type="Pfam" id="PF00271">
    <property type="entry name" value="Helicase_C"/>
    <property type="match status" value="1"/>
</dbReference>
<dbReference type="SMART" id="SM00487">
    <property type="entry name" value="DEXDc"/>
    <property type="match status" value="1"/>
</dbReference>
<dbReference type="SMART" id="SM00490">
    <property type="entry name" value="HELICc"/>
    <property type="match status" value="1"/>
</dbReference>
<dbReference type="SUPFAM" id="SSF52540">
    <property type="entry name" value="P-loop containing nucleoside triphosphate hydrolases"/>
    <property type="match status" value="1"/>
</dbReference>
<dbReference type="PROSITE" id="PS00039">
    <property type="entry name" value="DEAD_ATP_HELICASE"/>
    <property type="match status" value="1"/>
</dbReference>
<dbReference type="PROSITE" id="PS51192">
    <property type="entry name" value="HELICASE_ATP_BIND_1"/>
    <property type="match status" value="1"/>
</dbReference>
<dbReference type="PROSITE" id="PS51194">
    <property type="entry name" value="HELICASE_CTER"/>
    <property type="match status" value="1"/>
</dbReference>
<dbReference type="PROSITE" id="PS51195">
    <property type="entry name" value="Q_MOTIF"/>
    <property type="match status" value="1"/>
</dbReference>
<organism>
    <name type="scientific">Kluyveromyces lactis (strain ATCC 8585 / CBS 2359 / DSM 70799 / NBRC 1267 / NRRL Y-1140 / WM37)</name>
    <name type="common">Yeast</name>
    <name type="synonym">Candida sphaerica</name>
    <dbReference type="NCBI Taxonomy" id="284590"/>
    <lineage>
        <taxon>Eukaryota</taxon>
        <taxon>Fungi</taxon>
        <taxon>Dikarya</taxon>
        <taxon>Ascomycota</taxon>
        <taxon>Saccharomycotina</taxon>
        <taxon>Saccharomycetes</taxon>
        <taxon>Saccharomycetales</taxon>
        <taxon>Saccharomycetaceae</taxon>
        <taxon>Kluyveromyces</taxon>
    </lineage>
</organism>
<reference key="1">
    <citation type="journal article" date="2004" name="Nature">
        <title>Genome evolution in yeasts.</title>
        <authorList>
            <person name="Dujon B."/>
            <person name="Sherman D."/>
            <person name="Fischer G."/>
            <person name="Durrens P."/>
            <person name="Casaregola S."/>
            <person name="Lafontaine I."/>
            <person name="de Montigny J."/>
            <person name="Marck C."/>
            <person name="Neuveglise C."/>
            <person name="Talla E."/>
            <person name="Goffard N."/>
            <person name="Frangeul L."/>
            <person name="Aigle M."/>
            <person name="Anthouard V."/>
            <person name="Babour A."/>
            <person name="Barbe V."/>
            <person name="Barnay S."/>
            <person name="Blanchin S."/>
            <person name="Beckerich J.-M."/>
            <person name="Beyne E."/>
            <person name="Bleykasten C."/>
            <person name="Boisrame A."/>
            <person name="Boyer J."/>
            <person name="Cattolico L."/>
            <person name="Confanioleri F."/>
            <person name="de Daruvar A."/>
            <person name="Despons L."/>
            <person name="Fabre E."/>
            <person name="Fairhead C."/>
            <person name="Ferry-Dumazet H."/>
            <person name="Groppi A."/>
            <person name="Hantraye F."/>
            <person name="Hennequin C."/>
            <person name="Jauniaux N."/>
            <person name="Joyet P."/>
            <person name="Kachouri R."/>
            <person name="Kerrest A."/>
            <person name="Koszul R."/>
            <person name="Lemaire M."/>
            <person name="Lesur I."/>
            <person name="Ma L."/>
            <person name="Muller H."/>
            <person name="Nicaud J.-M."/>
            <person name="Nikolski M."/>
            <person name="Oztas S."/>
            <person name="Ozier-Kalogeropoulos O."/>
            <person name="Pellenz S."/>
            <person name="Potier S."/>
            <person name="Richard G.-F."/>
            <person name="Straub M.-L."/>
            <person name="Suleau A."/>
            <person name="Swennen D."/>
            <person name="Tekaia F."/>
            <person name="Wesolowski-Louvel M."/>
            <person name="Westhof E."/>
            <person name="Wirth B."/>
            <person name="Zeniou-Meyer M."/>
            <person name="Zivanovic Y."/>
            <person name="Bolotin-Fukuhara M."/>
            <person name="Thierry A."/>
            <person name="Bouchier C."/>
            <person name="Caudron B."/>
            <person name="Scarpelli C."/>
            <person name="Gaillardin C."/>
            <person name="Weissenbach J."/>
            <person name="Wincker P."/>
            <person name="Souciet J.-L."/>
        </authorList>
    </citation>
    <scope>NUCLEOTIDE SEQUENCE [LARGE SCALE GENOMIC DNA]</scope>
    <source>
        <strain>ATCC 8585 / CBS 2359 / DSM 70799 / NBRC 1267 / NRRL Y-1140 / WM37</strain>
    </source>
</reference>